<comment type="function">
    <text evidence="1">Tachykinins are active peptides which excite neurons, evoke behavioral responses, are potent vasodilators and secretagogues, and contract (directly or indirectly) many smooth muscles. Stimulates gut muscle contractions (By similarity).</text>
</comment>
<comment type="subcellular location">
    <subcellularLocation>
        <location evidence="3">Secreted</location>
    </subcellularLocation>
</comment>
<comment type="similarity">
    <text evidence="3">Belongs to the tachykinin family.</text>
</comment>
<comment type="sequence caution" evidence="5">
    <conflict type="erroneous gene model prediction">
        <sequence resource="EMBL-CDS" id="EAL28625"/>
    </conflict>
</comment>
<keyword id="KW-0027">Amidation</keyword>
<keyword id="KW-0165">Cleavage on pair of basic residues</keyword>
<keyword id="KW-0527">Neuropeptide</keyword>
<keyword id="KW-1185">Reference proteome</keyword>
<keyword id="KW-0964">Secreted</keyword>
<keyword id="KW-0732">Signal</keyword>
<sequence>MRSQGGSFAVALLLLLLLTAAATAADAEPDVESSVSTLPPGADAPRRMVKRAPTSSFIGMRGKKEDEKDQRAADWMGPDPLDYADMDEDSIYYENGKRLKKAPMSFVGMRGKKYIPISNRLSDVLHQIEEQRMRENLLEDLFERLAAGDDSVGDVGKRAPTGFTGMRGKRPMSGDDDDNDAMELLQKRAPVNSFLGVRGKKDVSHQHYKRAALSEAYDVRGKKERYADFNSKFVAVRGKKSEQEAGLDTGDGDGDQQYLVRPWLYLWADNKRAPSGFQGMRGKRPALAE</sequence>
<dbReference type="EMBL" id="CM000070">
    <property type="protein sequence ID" value="EAL28625.2"/>
    <property type="status" value="ALT_SEQ"/>
    <property type="molecule type" value="Genomic_DNA"/>
</dbReference>
<dbReference type="RefSeq" id="XP_015037927.1">
    <property type="nucleotide sequence ID" value="XM_015182441.1"/>
</dbReference>
<dbReference type="FunCoup" id="Q295T3">
    <property type="interactions" value="41"/>
</dbReference>
<dbReference type="STRING" id="46245.Q295T3"/>
<dbReference type="EnsemblMetazoa" id="FBtr0375568">
    <property type="protein sequence ID" value="FBpp0336948"/>
    <property type="gene ID" value="FBgn0073245"/>
</dbReference>
<dbReference type="GeneID" id="4802586"/>
<dbReference type="KEGG" id="dpo:4802586"/>
<dbReference type="CTD" id="21874"/>
<dbReference type="eggNOG" id="ENOG502S9VB">
    <property type="taxonomic scope" value="Eukaryota"/>
</dbReference>
<dbReference type="InParanoid" id="Q295T3"/>
<dbReference type="ChiTaRS" id="Tk">
    <property type="organism name" value="fly"/>
</dbReference>
<dbReference type="Proteomes" id="UP000001819">
    <property type="component" value="Chromosome 2"/>
</dbReference>
<dbReference type="Bgee" id="FBgn0073245">
    <property type="expression patterns" value="Expressed in insect adult head and 2 other cell types or tissues"/>
</dbReference>
<dbReference type="ExpressionAtlas" id="Q295T3">
    <property type="expression patterns" value="baseline"/>
</dbReference>
<dbReference type="GO" id="GO:0005615">
    <property type="term" value="C:extracellular space"/>
    <property type="evidence" value="ECO:0000250"/>
    <property type="project" value="UniProtKB"/>
</dbReference>
<dbReference type="GO" id="GO:0007218">
    <property type="term" value="P:neuropeptide signaling pathway"/>
    <property type="evidence" value="ECO:0007669"/>
    <property type="project" value="UniProtKB-KW"/>
</dbReference>
<dbReference type="GO" id="GO:0060450">
    <property type="term" value="P:positive regulation of hindgut contraction"/>
    <property type="evidence" value="ECO:0000250"/>
    <property type="project" value="UniProtKB"/>
</dbReference>
<dbReference type="GO" id="GO:0007217">
    <property type="term" value="P:tachykinin receptor signaling pathway"/>
    <property type="evidence" value="ECO:0000250"/>
    <property type="project" value="UniProtKB"/>
</dbReference>
<accession>Q295T3</accession>
<gene>
    <name evidence="2" type="primary">Tk</name>
    <name type="ORF">GA13208</name>
</gene>
<name>TACHY_DROPS</name>
<protein>
    <recommendedName>
        <fullName>Tachykinins</fullName>
    </recommendedName>
    <component>
        <recommendedName>
            <fullName>Tachykinin-related peptide 1</fullName>
            <shortName>TK-1</shortName>
        </recommendedName>
        <alternativeName>
            <fullName>APTSSFIGMR-amide</fullName>
        </alternativeName>
    </component>
    <component>
        <recommendedName>
            <fullName>Tachykinin-associated peptide 1</fullName>
            <shortName>TAP1</shortName>
        </recommendedName>
        <alternativeName>
            <fullName>EDEKDQRAADWMGPDPLDYADMDEDSIYYEN-amide</fullName>
        </alternativeName>
    </component>
    <component>
        <recommendedName>
            <fullName>Tachykinin-related peptide 2</fullName>
            <shortName>TK-2</shortName>
        </recommendedName>
        <alternativeName>
            <fullName>APMSFVGMR-amide</fullName>
        </alternativeName>
    </component>
    <component>
        <recommendedName>
            <fullName>Tachykinin-associated peptide 2</fullName>
            <shortName>TAP2</shortName>
        </recommendedName>
        <alternativeName>
            <fullName>YIPISNRLSDVLHQIEEQRMRENLLEDLFERLAAGDDSVGDV-amide</fullName>
        </alternativeName>
    </component>
    <component>
        <recommendedName>
            <fullName>Tachykinin-related peptide 3</fullName>
            <shortName>TK-3</shortName>
        </recommendedName>
        <alternativeName>
            <fullName>APTGFTGMR-amide</fullName>
        </alternativeName>
    </component>
    <component>
        <recommendedName>
            <fullName>Tachykinin-associated peptide 3</fullName>
            <shortName>TAP3</shortName>
        </recommendedName>
        <alternativeName>
            <fullName>Brain peptide PMSGDDDDNDAMELLQ</fullName>
        </alternativeName>
    </component>
    <component>
        <recommendedName>
            <fullName>Tachykinin-related peptide 4</fullName>
            <shortName>TK-4</shortName>
        </recommendedName>
        <alternativeName>
            <fullName>APVNSFLGVR-amide</fullName>
        </alternativeName>
    </component>
    <component>
        <recommendedName>
            <fullName>Tachykinin-associated peptide 4</fullName>
            <shortName>TAP4</shortName>
        </recommendedName>
        <alternativeName>
            <fullName>Brain peptide DVSHQHY</fullName>
        </alternativeName>
    </component>
    <component>
        <recommendedName>
            <fullName>Tachykinin-associated peptide 5</fullName>
            <shortName>TAP5</shortName>
        </recommendedName>
        <alternativeName>
            <fullName>AALSEAYDVRGKKERYADFNSKFVAVR-amide</fullName>
        </alternativeName>
    </component>
    <component>
        <recommendedName>
            <fullName>Tachykinin-associated peptide 6</fullName>
            <shortName>TAP6</shortName>
        </recommendedName>
        <alternativeName>
            <fullName>Brain peptide SEQEAGLDTGDGDGDQQYLVRPWLYLWADN</fullName>
        </alternativeName>
    </component>
    <component>
        <recommendedName>
            <fullName>Tachykinin-related peptide 5</fullName>
            <shortName>TK-5</shortName>
        </recommendedName>
        <alternativeName>
            <fullName>APSGFQGMR-amide</fullName>
        </alternativeName>
    </component>
</protein>
<reference key="1">
    <citation type="journal article" date="2005" name="Genome Res.">
        <title>Comparative genome sequencing of Drosophila pseudoobscura: chromosomal, gene, and cis-element evolution.</title>
        <authorList>
            <person name="Richards S."/>
            <person name="Liu Y."/>
            <person name="Bettencourt B.R."/>
            <person name="Hradecky P."/>
            <person name="Letovsky S."/>
            <person name="Nielsen R."/>
            <person name="Thornton K."/>
            <person name="Hubisz M.J."/>
            <person name="Chen R."/>
            <person name="Meisel R.P."/>
            <person name="Couronne O."/>
            <person name="Hua S."/>
            <person name="Smith M.A."/>
            <person name="Zhang P."/>
            <person name="Liu J."/>
            <person name="Bussemaker H.J."/>
            <person name="van Batenburg M.F."/>
            <person name="Howells S.L."/>
            <person name="Scherer S.E."/>
            <person name="Sodergren E."/>
            <person name="Matthews B.B."/>
            <person name="Crosby M.A."/>
            <person name="Schroeder A.J."/>
            <person name="Ortiz-Barrientos D."/>
            <person name="Rives C.M."/>
            <person name="Metzker M.L."/>
            <person name="Muzny D.M."/>
            <person name="Scott G."/>
            <person name="Steffen D."/>
            <person name="Wheeler D.A."/>
            <person name="Worley K.C."/>
            <person name="Havlak P."/>
            <person name="Durbin K.J."/>
            <person name="Egan A."/>
            <person name="Gill R."/>
            <person name="Hume J."/>
            <person name="Morgan M.B."/>
            <person name="Miner G."/>
            <person name="Hamilton C."/>
            <person name="Huang Y."/>
            <person name="Waldron L."/>
            <person name="Verduzco D."/>
            <person name="Clerc-Blankenburg K.P."/>
            <person name="Dubchak I."/>
            <person name="Noor M.A.F."/>
            <person name="Anderson W."/>
            <person name="White K.P."/>
            <person name="Clark A.G."/>
            <person name="Schaeffer S.W."/>
            <person name="Gelbart W.M."/>
            <person name="Weinstock G.M."/>
            <person name="Gibbs R.A."/>
        </authorList>
    </citation>
    <scope>NUCLEOTIDE SEQUENCE [LARGE SCALE GENOMIC DNA]</scope>
    <source>
        <strain>MV2-25 / Tucson 14011-0121.94</strain>
    </source>
</reference>
<evidence type="ECO:0000250" key="1"/>
<evidence type="ECO:0000250" key="2">
    <source>
        <dbReference type="UniProtKB" id="Q9VGE8"/>
    </source>
</evidence>
<evidence type="ECO:0000255" key="3"/>
<evidence type="ECO:0000256" key="4">
    <source>
        <dbReference type="SAM" id="MobiDB-lite"/>
    </source>
</evidence>
<evidence type="ECO:0000305" key="5"/>
<feature type="signal peptide" evidence="3">
    <location>
        <begin position="1"/>
        <end position="24"/>
    </location>
</feature>
<feature type="propeptide" id="PRO_0000343501" evidence="3">
    <location>
        <begin position="25"/>
        <end position="49"/>
    </location>
</feature>
<feature type="peptide" id="PRO_0000343502" description="Tachykinin-related peptide 1" evidence="3">
    <location>
        <begin position="52"/>
        <end position="61"/>
    </location>
</feature>
<feature type="peptide" id="PRO_0000343503" description="Tachykinin-associated peptide 1" evidence="3">
    <location>
        <begin position="65"/>
        <end position="95"/>
    </location>
</feature>
<feature type="peptide" id="PRO_0000343504" description="Tachykinin-related peptide 2" evidence="3">
    <location>
        <begin position="102"/>
        <end position="110"/>
    </location>
</feature>
<feature type="peptide" id="PRO_0000343505" description="Tachykinin-associated peptide 2" evidence="3">
    <location>
        <begin position="114"/>
        <end position="155"/>
    </location>
</feature>
<feature type="peptide" id="PRO_0000343506" description="Tachykinin-related peptide 3" evidence="3">
    <location>
        <begin position="159"/>
        <end position="167"/>
    </location>
</feature>
<feature type="peptide" id="PRO_0000343507" description="Tachykinin-associated peptide 3" evidence="3">
    <location>
        <begin position="171"/>
        <end position="186"/>
    </location>
</feature>
<feature type="peptide" id="PRO_0000343508" description="Tachykinin-related peptide 4" evidence="3">
    <location>
        <begin position="189"/>
        <end position="198"/>
    </location>
</feature>
<feature type="peptide" id="PRO_0000343509" description="Tachykinin-associated peptide 4" evidence="3">
    <location>
        <begin position="202"/>
        <end position="208"/>
    </location>
</feature>
<feature type="peptide" id="PRO_0000343510" description="Tachykinin-associated peptide 5" evidence="3">
    <location>
        <begin position="211"/>
        <end position="237"/>
    </location>
</feature>
<feature type="peptide" id="PRO_0000343511" description="Tachykinin-associated peptide 6" evidence="3">
    <location>
        <begin position="241"/>
        <end position="270"/>
    </location>
</feature>
<feature type="peptide" id="PRO_0000343512" description="Tachykinin-related peptide 5" evidence="3">
    <location>
        <begin position="273"/>
        <end position="281"/>
    </location>
</feature>
<feature type="propeptide" id="PRO_0000343513" evidence="3">
    <location>
        <begin position="285"/>
        <end position="289"/>
    </location>
</feature>
<feature type="region of interest" description="Disordered" evidence="4">
    <location>
        <begin position="28"/>
        <end position="80"/>
    </location>
</feature>
<feature type="region of interest" description="Disordered" evidence="4">
    <location>
        <begin position="156"/>
        <end position="175"/>
    </location>
</feature>
<feature type="compositionally biased region" description="Basic and acidic residues" evidence="4">
    <location>
        <begin position="62"/>
        <end position="72"/>
    </location>
</feature>
<feature type="modified residue" description="Arginine amide" evidence="3">
    <location>
        <position position="61"/>
    </location>
</feature>
<feature type="modified residue" description="Asparagine amide" evidence="3">
    <location>
        <position position="95"/>
    </location>
</feature>
<feature type="modified residue" description="Arginine amide" evidence="3">
    <location>
        <position position="110"/>
    </location>
</feature>
<feature type="modified residue" description="Valine amide" evidence="3">
    <location>
        <position position="155"/>
    </location>
</feature>
<feature type="modified residue" description="Arginine amide" evidence="3">
    <location>
        <position position="167"/>
    </location>
</feature>
<feature type="modified residue" description="Arginine amide" evidence="3">
    <location>
        <position position="198"/>
    </location>
</feature>
<feature type="modified residue" description="Arginine amide" evidence="3">
    <location>
        <position position="237"/>
    </location>
</feature>
<feature type="modified residue" description="Arginine amide" evidence="3">
    <location>
        <position position="281"/>
    </location>
</feature>
<proteinExistence type="inferred from homology"/>
<organism>
    <name type="scientific">Drosophila pseudoobscura pseudoobscura</name>
    <name type="common">Fruit fly</name>
    <dbReference type="NCBI Taxonomy" id="46245"/>
    <lineage>
        <taxon>Eukaryota</taxon>
        <taxon>Metazoa</taxon>
        <taxon>Ecdysozoa</taxon>
        <taxon>Arthropoda</taxon>
        <taxon>Hexapoda</taxon>
        <taxon>Insecta</taxon>
        <taxon>Pterygota</taxon>
        <taxon>Neoptera</taxon>
        <taxon>Endopterygota</taxon>
        <taxon>Diptera</taxon>
        <taxon>Brachycera</taxon>
        <taxon>Muscomorpha</taxon>
        <taxon>Ephydroidea</taxon>
        <taxon>Drosophilidae</taxon>
        <taxon>Drosophila</taxon>
        <taxon>Sophophora</taxon>
    </lineage>
</organism>